<proteinExistence type="evidence at protein level"/>
<organism>
    <name type="scientific">Boiga irregularis</name>
    <name type="common">Brown tree snake</name>
    <dbReference type="NCBI Taxonomy" id="92519"/>
    <lineage>
        <taxon>Eukaryota</taxon>
        <taxon>Metazoa</taxon>
        <taxon>Chordata</taxon>
        <taxon>Craniata</taxon>
        <taxon>Vertebrata</taxon>
        <taxon>Euteleostomi</taxon>
        <taxon>Lepidosauria</taxon>
        <taxon>Squamata</taxon>
        <taxon>Bifurcata</taxon>
        <taxon>Unidentata</taxon>
        <taxon>Episquamata</taxon>
        <taxon>Toxicofera</taxon>
        <taxon>Serpentes</taxon>
        <taxon>Colubroidea</taxon>
        <taxon>Colubridae</taxon>
        <taxon>Colubrinae</taxon>
        <taxon>Boiga</taxon>
    </lineage>
</organism>
<evidence type="ECO:0000255" key="1"/>
<evidence type="ECO:0000269" key="2">
    <source>
    </source>
</evidence>
<evidence type="ECO:0000303" key="3">
    <source>
    </source>
</evidence>
<evidence type="ECO:0000305" key="4"/>
<evidence type="ECO:0000312" key="5">
    <source>
        <dbReference type="PDB" id="2H7Z"/>
    </source>
</evidence>
<evidence type="ECO:0007829" key="6">
    <source>
        <dbReference type="PDB" id="2H7Z"/>
    </source>
</evidence>
<protein>
    <recommendedName>
        <fullName evidence="3">Irditoxin subunit B</fullName>
        <shortName evidence="3">IrTxB</shortName>
    </recommendedName>
</protein>
<name>3NBB_BOIIR</name>
<dbReference type="EMBL" id="DQ304539">
    <property type="protein sequence ID" value="ABC17854.1"/>
    <property type="molecule type" value="mRNA"/>
</dbReference>
<dbReference type="PDB" id="2H7Z">
    <property type="method" value="X-ray"/>
    <property type="resolution" value="1.50 A"/>
    <property type="chains" value="B=35-111"/>
</dbReference>
<dbReference type="PDBsum" id="2H7Z"/>
<dbReference type="SMR" id="A0S865"/>
<dbReference type="EvolutionaryTrace" id="A0S865"/>
<dbReference type="GO" id="GO:0005576">
    <property type="term" value="C:extracellular region"/>
    <property type="evidence" value="ECO:0000314"/>
    <property type="project" value="UniProtKB"/>
</dbReference>
<dbReference type="GO" id="GO:0030550">
    <property type="term" value="F:acetylcholine receptor inhibitor activity"/>
    <property type="evidence" value="ECO:0000314"/>
    <property type="project" value="UniProtKB"/>
</dbReference>
<dbReference type="GO" id="GO:0099106">
    <property type="term" value="F:ion channel regulator activity"/>
    <property type="evidence" value="ECO:0007669"/>
    <property type="project" value="UniProtKB-KW"/>
</dbReference>
<dbReference type="GO" id="GO:0090729">
    <property type="term" value="F:toxin activity"/>
    <property type="evidence" value="ECO:0000314"/>
    <property type="project" value="UniProtKB"/>
</dbReference>
<dbReference type="GO" id="GO:0044616">
    <property type="term" value="P:venom-mediated paralysis in another organism"/>
    <property type="evidence" value="ECO:0000314"/>
    <property type="project" value="UniProtKB"/>
</dbReference>
<dbReference type="CDD" id="cd00206">
    <property type="entry name" value="TFP_snake_toxin"/>
    <property type="match status" value="1"/>
</dbReference>
<dbReference type="FunFam" id="2.10.60.10:FF:000052">
    <property type="entry name" value="Irditoxin subunit B"/>
    <property type="match status" value="1"/>
</dbReference>
<dbReference type="Gene3D" id="2.10.60.10">
    <property type="entry name" value="CD59"/>
    <property type="match status" value="1"/>
</dbReference>
<dbReference type="InterPro" id="IPR003571">
    <property type="entry name" value="Snake_3FTx"/>
</dbReference>
<dbReference type="InterPro" id="IPR045860">
    <property type="entry name" value="Snake_toxin-like_sf"/>
</dbReference>
<dbReference type="InterPro" id="IPR018354">
    <property type="entry name" value="Snake_toxin_con_site"/>
</dbReference>
<dbReference type="InterPro" id="IPR054131">
    <property type="entry name" value="Toxin_cobra-type"/>
</dbReference>
<dbReference type="Pfam" id="PF21947">
    <property type="entry name" value="Toxin_cobra-type"/>
    <property type="match status" value="1"/>
</dbReference>
<dbReference type="SUPFAM" id="SSF57302">
    <property type="entry name" value="Snake toxin-like"/>
    <property type="match status" value="1"/>
</dbReference>
<dbReference type="PROSITE" id="PS00272">
    <property type="entry name" value="SNAKE_TOXIN"/>
    <property type="match status" value="1"/>
</dbReference>
<comment type="function">
    <text evidence="2">This bird and reptile-specific postsynaptic neurotoxin inhibits the chick muscle alpha-1-beta-1-gamma-delta (CHRNA1-CHRNB1-CHRNG-CHRND) nicotinic acetylcholine receptor (nAChR) 100-fold more compared with the mouse receptor. In vivo, produces rapid flaccid paralysis, dyspnea and increased respiratory rate in geckos. At sublethal doses geckos were immobilized for up to three days and then recovered. Chicks injected with lethal doses showed rapid onset of inactivity, dyspnea and neck droop, and no extended paralysis with survival was seen.</text>
</comment>
<comment type="subunit">
    <text evidence="2">Heterodimer of A and B chains; disulfide-linked.</text>
</comment>
<comment type="subcellular location">
    <subcellularLocation>
        <location evidence="2">Secreted</location>
    </subcellularLocation>
</comment>
<comment type="tissue specificity">
    <text evidence="4">Expressed by the venom gland.</text>
</comment>
<comment type="mass spectrometry">
    <text>The measured mass is that of the reduced peptide.</text>
</comment>
<comment type="toxic dose">
    <text evidence="2">LD(50) is 0.55 mg/kg by intraperitoneal injection into geckos.</text>
</comment>
<comment type="toxic dose">
    <text evidence="2">LD(50) is 0.22 mg/kg by intraperitoneal injection into chicks.</text>
</comment>
<comment type="miscellaneous">
    <text evidence="2">IC(50) is 11.2 nM for indirectly stimulated, nerve-evoked twitch responses of the chick biventer cervicis muscle acetylcholine receptor channel.</text>
</comment>
<comment type="miscellaneous">
    <text evidence="2">Negative results: is not toxic to mice at doses up to 25 ug/g (i.p.). Does not inhibit mouse alpha-3-beta-2/CHRNA3-CHRNB2 and alpha-7/CHRNA7 nicotinic acetylcholine receptors.</text>
</comment>
<comment type="similarity">
    <text evidence="4">Belongs to the three-finger toxin family. Ancestral subfamily. Boigatoxin sub-subfamily.</text>
</comment>
<accession>A0S865</accession>
<feature type="signal peptide" evidence="1">
    <location>
        <begin position="1"/>
        <end position="19"/>
    </location>
</feature>
<feature type="propeptide" id="PRO_0000313789" evidence="2">
    <location>
        <begin position="20"/>
        <end position="34"/>
    </location>
</feature>
<feature type="chain" id="PRO_5000171335" description="Irditoxin subunit B" evidence="2">
    <location>
        <begin position="35"/>
        <end position="111"/>
    </location>
</feature>
<feature type="modified residue" description="Pyrrolidone carboxylic acid" evidence="2">
    <location>
        <position position="35"/>
    </location>
</feature>
<feature type="disulfide bond" evidence="2 5">
    <location>
        <begin position="44"/>
        <end position="68"/>
    </location>
</feature>
<feature type="disulfide bond" evidence="2 5">
    <location>
        <begin position="47"/>
        <end position="55"/>
    </location>
</feature>
<feature type="disulfide bond" description="Interchain (with C-76 in Irditoxin subunit A)" evidence="2 5">
    <location>
        <position position="52"/>
    </location>
</feature>
<feature type="disulfide bond" evidence="2 5">
    <location>
        <begin position="61"/>
        <end position="87"/>
    </location>
</feature>
<feature type="disulfide bond" evidence="2 5">
    <location>
        <begin position="91"/>
        <end position="102"/>
    </location>
</feature>
<feature type="disulfide bond" evidence="2 5">
    <location>
        <begin position="103"/>
        <end position="108"/>
    </location>
</feature>
<feature type="turn" evidence="6">
    <location>
        <begin position="49"/>
        <end position="51"/>
    </location>
</feature>
<feature type="strand" evidence="6">
    <location>
        <begin position="67"/>
        <end position="74"/>
    </location>
</feature>
<feature type="strand" evidence="6">
    <location>
        <begin position="76"/>
        <end position="78"/>
    </location>
</feature>
<feature type="strand" evidence="6">
    <location>
        <begin position="80"/>
        <end position="90"/>
    </location>
</feature>
<feature type="strand" evidence="6">
    <location>
        <begin position="99"/>
        <end position="103"/>
    </location>
</feature>
<feature type="turn" evidence="6">
    <location>
        <begin position="106"/>
        <end position="109"/>
    </location>
</feature>
<keyword id="KW-0002">3D-structure</keyword>
<keyword id="KW-0008">Acetylcholine receptor inhibiting toxin</keyword>
<keyword id="KW-0903">Direct protein sequencing</keyword>
<keyword id="KW-1015">Disulfide bond</keyword>
<keyword id="KW-0872">Ion channel impairing toxin</keyword>
<keyword id="KW-0528">Neurotoxin</keyword>
<keyword id="KW-0629">Postsynaptic neurotoxin</keyword>
<keyword id="KW-0873">Pyrrolidone carboxylic acid</keyword>
<keyword id="KW-0964">Secreted</keyword>
<keyword id="KW-0732">Signal</keyword>
<keyword id="KW-0800">Toxin</keyword>
<sequence>MKTLLLAVAVVAFVCLGSADQLGLGRQQIDWGKGQAKGPPYTLCFECNRETCSNCFKDNRCPPYHRTCYTLYRPDGNGEMKWAVKGCAKTCPTAQPGESVQCCNTPKCNDY</sequence>
<reference key="1">
    <citation type="journal article" date="2009" name="FASEB J.">
        <title>Irditoxin, a novel covalently linked heterodimeric three-finger toxin with high taxon-specific neurotoxicity.</title>
        <authorList>
            <person name="Pawlak J."/>
            <person name="Mackessy S.P."/>
            <person name="Sixberry N.M."/>
            <person name="Stura E.A."/>
            <person name="Le Du M.H."/>
            <person name="Menez R."/>
            <person name="Foo C.S."/>
            <person name="Menez A."/>
            <person name="Nirthanan S."/>
            <person name="Kini R.M."/>
        </authorList>
    </citation>
    <scope>NUCLEOTIDE SEQUENCE [MRNA]</scope>
    <scope>PROTEIN SEQUENCE OF 35-111</scope>
    <scope>FUNCTION</scope>
    <scope>SUBUNIT</scope>
    <scope>SUBCELLULAR LOCATION</scope>
    <scope>MASS SPECTROMETRY</scope>
    <scope>TOXIC DOSE</scope>
    <scope>X-RAY CRYSTALLOGRAPHY (1.5 ANGSTROMS) OF 35-109</scope>
    <scope>PYROGLUTAMATE FORMATION AT GLN-35</scope>
    <scope>DISULFIDE BONDS</scope>
    <source>
        <tissue>Venom</tissue>
        <tissue>Venom gland</tissue>
    </source>
</reference>